<protein>
    <recommendedName>
        <fullName evidence="1">Phosphoribosylformylglycinamidine cyclo-ligase</fullName>
        <ecNumber evidence="1">6.3.3.1</ecNumber>
    </recommendedName>
    <alternativeName>
        <fullName evidence="1">AIR synthase</fullName>
    </alternativeName>
    <alternativeName>
        <fullName evidence="1">AIRS</fullName>
    </alternativeName>
    <alternativeName>
        <fullName evidence="1">Phosphoribosyl-aminoimidazole synthetase</fullName>
    </alternativeName>
</protein>
<comment type="catalytic activity">
    <reaction evidence="1">
        <text>2-formamido-N(1)-(5-O-phospho-beta-D-ribosyl)acetamidine + ATP = 5-amino-1-(5-phospho-beta-D-ribosyl)imidazole + ADP + phosphate + H(+)</text>
        <dbReference type="Rhea" id="RHEA:23032"/>
        <dbReference type="ChEBI" id="CHEBI:15378"/>
        <dbReference type="ChEBI" id="CHEBI:30616"/>
        <dbReference type="ChEBI" id="CHEBI:43474"/>
        <dbReference type="ChEBI" id="CHEBI:137981"/>
        <dbReference type="ChEBI" id="CHEBI:147287"/>
        <dbReference type="ChEBI" id="CHEBI:456216"/>
        <dbReference type="EC" id="6.3.3.1"/>
    </reaction>
</comment>
<comment type="pathway">
    <text evidence="1">Purine metabolism; IMP biosynthesis via de novo pathway; 5-amino-1-(5-phospho-D-ribosyl)imidazole from N(2)-formyl-N(1)-(5-phospho-D-ribosyl)glycinamide: step 2/2.</text>
</comment>
<comment type="subcellular location">
    <subcellularLocation>
        <location evidence="1">Cytoplasm</location>
    </subcellularLocation>
</comment>
<comment type="similarity">
    <text evidence="1">Belongs to the AIR synthase family.</text>
</comment>
<accession>Q49WJ5</accession>
<proteinExistence type="inferred from homology"/>
<dbReference type="EC" id="6.3.3.1" evidence="1"/>
<dbReference type="EMBL" id="AP008934">
    <property type="protein sequence ID" value="BAE18864.1"/>
    <property type="molecule type" value="Genomic_DNA"/>
</dbReference>
<dbReference type="RefSeq" id="WP_011303434.1">
    <property type="nucleotide sequence ID" value="NZ_MTGA01000039.1"/>
</dbReference>
<dbReference type="SMR" id="Q49WJ5"/>
<dbReference type="GeneID" id="3616628"/>
<dbReference type="KEGG" id="ssp:SSP1719"/>
<dbReference type="PATRIC" id="fig|342451.11.peg.1718"/>
<dbReference type="eggNOG" id="COG0150">
    <property type="taxonomic scope" value="Bacteria"/>
</dbReference>
<dbReference type="HOGENOM" id="CLU_047116_0_0_9"/>
<dbReference type="OrthoDB" id="9802507at2"/>
<dbReference type="UniPathway" id="UPA00074">
    <property type="reaction ID" value="UER00129"/>
</dbReference>
<dbReference type="Proteomes" id="UP000006371">
    <property type="component" value="Chromosome"/>
</dbReference>
<dbReference type="GO" id="GO:0005829">
    <property type="term" value="C:cytosol"/>
    <property type="evidence" value="ECO:0007669"/>
    <property type="project" value="TreeGrafter"/>
</dbReference>
<dbReference type="GO" id="GO:0005524">
    <property type="term" value="F:ATP binding"/>
    <property type="evidence" value="ECO:0007669"/>
    <property type="project" value="UniProtKB-KW"/>
</dbReference>
<dbReference type="GO" id="GO:0004637">
    <property type="term" value="F:phosphoribosylamine-glycine ligase activity"/>
    <property type="evidence" value="ECO:0007669"/>
    <property type="project" value="TreeGrafter"/>
</dbReference>
<dbReference type="GO" id="GO:0004641">
    <property type="term" value="F:phosphoribosylformylglycinamidine cyclo-ligase activity"/>
    <property type="evidence" value="ECO:0007669"/>
    <property type="project" value="UniProtKB-UniRule"/>
</dbReference>
<dbReference type="GO" id="GO:0006189">
    <property type="term" value="P:'de novo' IMP biosynthetic process"/>
    <property type="evidence" value="ECO:0007669"/>
    <property type="project" value="UniProtKB-UniRule"/>
</dbReference>
<dbReference type="GO" id="GO:0046084">
    <property type="term" value="P:adenine biosynthetic process"/>
    <property type="evidence" value="ECO:0007669"/>
    <property type="project" value="TreeGrafter"/>
</dbReference>
<dbReference type="CDD" id="cd02196">
    <property type="entry name" value="PurM"/>
    <property type="match status" value="1"/>
</dbReference>
<dbReference type="FunFam" id="3.30.1330.10:FF:000001">
    <property type="entry name" value="Phosphoribosylformylglycinamidine cyclo-ligase"/>
    <property type="match status" value="1"/>
</dbReference>
<dbReference type="FunFam" id="3.90.650.10:FF:000001">
    <property type="entry name" value="Phosphoribosylformylglycinamidine cyclo-ligase"/>
    <property type="match status" value="1"/>
</dbReference>
<dbReference type="Gene3D" id="3.90.650.10">
    <property type="entry name" value="PurM-like C-terminal domain"/>
    <property type="match status" value="1"/>
</dbReference>
<dbReference type="Gene3D" id="3.30.1330.10">
    <property type="entry name" value="PurM-like, N-terminal domain"/>
    <property type="match status" value="1"/>
</dbReference>
<dbReference type="HAMAP" id="MF_00741">
    <property type="entry name" value="AIRS"/>
    <property type="match status" value="1"/>
</dbReference>
<dbReference type="InterPro" id="IPR010918">
    <property type="entry name" value="PurM-like_C_dom"/>
</dbReference>
<dbReference type="InterPro" id="IPR036676">
    <property type="entry name" value="PurM-like_C_sf"/>
</dbReference>
<dbReference type="InterPro" id="IPR016188">
    <property type="entry name" value="PurM-like_N"/>
</dbReference>
<dbReference type="InterPro" id="IPR036921">
    <property type="entry name" value="PurM-like_N_sf"/>
</dbReference>
<dbReference type="InterPro" id="IPR004733">
    <property type="entry name" value="PurM_cligase"/>
</dbReference>
<dbReference type="NCBIfam" id="TIGR00878">
    <property type="entry name" value="purM"/>
    <property type="match status" value="1"/>
</dbReference>
<dbReference type="PANTHER" id="PTHR10520:SF12">
    <property type="entry name" value="TRIFUNCTIONAL PURINE BIOSYNTHETIC PROTEIN ADENOSINE-3"/>
    <property type="match status" value="1"/>
</dbReference>
<dbReference type="PANTHER" id="PTHR10520">
    <property type="entry name" value="TRIFUNCTIONAL PURINE BIOSYNTHETIC PROTEIN ADENOSINE-3-RELATED"/>
    <property type="match status" value="1"/>
</dbReference>
<dbReference type="Pfam" id="PF00586">
    <property type="entry name" value="AIRS"/>
    <property type="match status" value="1"/>
</dbReference>
<dbReference type="Pfam" id="PF02769">
    <property type="entry name" value="AIRS_C"/>
    <property type="match status" value="1"/>
</dbReference>
<dbReference type="SUPFAM" id="SSF56042">
    <property type="entry name" value="PurM C-terminal domain-like"/>
    <property type="match status" value="1"/>
</dbReference>
<dbReference type="SUPFAM" id="SSF55326">
    <property type="entry name" value="PurM N-terminal domain-like"/>
    <property type="match status" value="1"/>
</dbReference>
<sequence length="342" mass="37005">MSKAYQQAGVDINAGYEAVERMTSHVQRTMRKEVLGGLGGFGATFDLSQLNMKAPLLVSGTDGVGTKLKLAIDNDKHDTIGIDAVAMCVNDILTTGAEPLYFLDYIATNKVVPEVIEQIVKGVSDGCEETNTALIGGETAEMGEMYHEGEYDLAGFAVGAVEKDDYIDGSSVEPGQAIIGLESSGIHSNGYSLVRKLIQQSGIKLSEPFNQEQTFLDAFLKPTRLYVKPVLAVKSSIKIYAMTHITGGGFYENIPRALPEGITAKIDVTQFPTPAIFDWLQEQGNISTDEMYNIFNMGIGFTLVVDNNQVESTLEILNGQNIKAYKIGETVKGNEPIQLTGV</sequence>
<feature type="chain" id="PRO_0000148254" description="Phosphoribosylformylglycinamidine cyclo-ligase">
    <location>
        <begin position="1"/>
        <end position="342"/>
    </location>
</feature>
<evidence type="ECO:0000255" key="1">
    <source>
        <dbReference type="HAMAP-Rule" id="MF_00741"/>
    </source>
</evidence>
<keyword id="KW-0067">ATP-binding</keyword>
<keyword id="KW-0963">Cytoplasm</keyword>
<keyword id="KW-0436">Ligase</keyword>
<keyword id="KW-0547">Nucleotide-binding</keyword>
<keyword id="KW-0658">Purine biosynthesis</keyword>
<keyword id="KW-1185">Reference proteome</keyword>
<organism>
    <name type="scientific">Staphylococcus saprophyticus subsp. saprophyticus (strain ATCC 15305 / DSM 20229 / NCIMB 8711 / NCTC 7292 / S-41)</name>
    <dbReference type="NCBI Taxonomy" id="342451"/>
    <lineage>
        <taxon>Bacteria</taxon>
        <taxon>Bacillati</taxon>
        <taxon>Bacillota</taxon>
        <taxon>Bacilli</taxon>
        <taxon>Bacillales</taxon>
        <taxon>Staphylococcaceae</taxon>
        <taxon>Staphylococcus</taxon>
    </lineage>
</organism>
<name>PUR5_STAS1</name>
<gene>
    <name evidence="1" type="primary">purM</name>
    <name type="ordered locus">SSP1719</name>
</gene>
<reference key="1">
    <citation type="journal article" date="2005" name="Proc. Natl. Acad. Sci. U.S.A.">
        <title>Whole genome sequence of Staphylococcus saprophyticus reveals the pathogenesis of uncomplicated urinary tract infection.</title>
        <authorList>
            <person name="Kuroda M."/>
            <person name="Yamashita A."/>
            <person name="Hirakawa H."/>
            <person name="Kumano M."/>
            <person name="Morikawa K."/>
            <person name="Higashide M."/>
            <person name="Maruyama A."/>
            <person name="Inose Y."/>
            <person name="Matoba K."/>
            <person name="Toh H."/>
            <person name="Kuhara S."/>
            <person name="Hattori M."/>
            <person name="Ohta T."/>
        </authorList>
    </citation>
    <scope>NUCLEOTIDE SEQUENCE [LARGE SCALE GENOMIC DNA]</scope>
    <source>
        <strain>ATCC 15305 / DSM 20229 / NCIMB 8711 / NCTC 7292 / S-41</strain>
    </source>
</reference>